<reference key="1">
    <citation type="journal article" date="2001" name="Science">
        <title>Complete genome sequence of a virulent isolate of Streptococcus pneumoniae.</title>
        <authorList>
            <person name="Tettelin H."/>
            <person name="Nelson K.E."/>
            <person name="Paulsen I.T."/>
            <person name="Eisen J.A."/>
            <person name="Read T.D."/>
            <person name="Peterson S.N."/>
            <person name="Heidelberg J.F."/>
            <person name="DeBoy R.T."/>
            <person name="Haft D.H."/>
            <person name="Dodson R.J."/>
            <person name="Durkin A.S."/>
            <person name="Gwinn M.L."/>
            <person name="Kolonay J.F."/>
            <person name="Nelson W.C."/>
            <person name="Peterson J.D."/>
            <person name="Umayam L.A."/>
            <person name="White O."/>
            <person name="Salzberg S.L."/>
            <person name="Lewis M.R."/>
            <person name="Radune D."/>
            <person name="Holtzapple E.K."/>
            <person name="Khouri H.M."/>
            <person name="Wolf A.M."/>
            <person name="Utterback T.R."/>
            <person name="Hansen C.L."/>
            <person name="McDonald L.A."/>
            <person name="Feldblyum T.V."/>
            <person name="Angiuoli S.V."/>
            <person name="Dickinson T."/>
            <person name="Hickey E.K."/>
            <person name="Holt I.E."/>
            <person name="Loftus B.J."/>
            <person name="Yang F."/>
            <person name="Smith H.O."/>
            <person name="Venter J.C."/>
            <person name="Dougherty B.A."/>
            <person name="Morrison D.A."/>
            <person name="Hollingshead S.K."/>
            <person name="Fraser C.M."/>
        </authorList>
    </citation>
    <scope>NUCLEOTIDE SEQUENCE [LARGE SCALE GENOMIC DNA]</scope>
    <source>
        <strain>ATCC BAA-334 / TIGR4</strain>
    </source>
</reference>
<sequence length="155" mass="17760">MAKGEGKVVAQNKKARHDYTIVDTLEAGMVLTGTEIKSVRAARINLKDGFAQVKNGEVWLSNVHIAPYEEGNIWNQEPERRRKLLLHKKQIQKLEQEIKGTGMTLVPLKVYIKDGYAKLLLGLAKGKHDYDKRESIKRREQNRDIARVMKAVNQR</sequence>
<feature type="chain" id="PRO_0000103041" description="SsrA-binding protein">
    <location>
        <begin position="1"/>
        <end position="155"/>
    </location>
</feature>
<comment type="function">
    <text evidence="1">Required for rescue of stalled ribosomes mediated by trans-translation. Binds to transfer-messenger RNA (tmRNA), required for stable association of tmRNA with ribosomes. tmRNA and SmpB together mimic tRNA shape, replacing the anticodon stem-loop with SmpB. tmRNA is encoded by the ssrA gene; the 2 termini fold to resemble tRNA(Ala) and it encodes a 'tag peptide', a short internal open reading frame. During trans-translation Ala-aminoacylated tmRNA acts like a tRNA, entering the A-site of stalled ribosomes, displacing the stalled mRNA. The ribosome then switches to translate the ORF on the tmRNA; the nascent peptide is terminated with the 'tag peptide' encoded by the tmRNA and targeted for degradation. The ribosome is freed to recommence translation, which seems to be the essential function of trans-translation.</text>
</comment>
<comment type="subcellular location">
    <subcellularLocation>
        <location evidence="1">Cytoplasm</location>
    </subcellularLocation>
    <text evidence="1">The tmRNA-SmpB complex associates with stalled 70S ribosomes.</text>
</comment>
<comment type="similarity">
    <text evidence="1">Belongs to the SmpB family.</text>
</comment>
<protein>
    <recommendedName>
        <fullName evidence="1">SsrA-binding protein</fullName>
    </recommendedName>
    <alternativeName>
        <fullName evidence="1">Small protein B</fullName>
    </alternativeName>
</protein>
<proteinExistence type="inferred from homology"/>
<accession>Q97R56</accession>
<organism>
    <name type="scientific">Streptococcus pneumoniae serotype 4 (strain ATCC BAA-334 / TIGR4)</name>
    <dbReference type="NCBI Taxonomy" id="170187"/>
    <lineage>
        <taxon>Bacteria</taxon>
        <taxon>Bacillati</taxon>
        <taxon>Bacillota</taxon>
        <taxon>Bacilli</taxon>
        <taxon>Lactobacillales</taxon>
        <taxon>Streptococcaceae</taxon>
        <taxon>Streptococcus</taxon>
    </lineage>
</organism>
<evidence type="ECO:0000255" key="1">
    <source>
        <dbReference type="HAMAP-Rule" id="MF_00023"/>
    </source>
</evidence>
<gene>
    <name evidence="1" type="primary">smpB</name>
    <name type="ordered locus">SP_0976</name>
</gene>
<name>SSRP_STRPN</name>
<keyword id="KW-0963">Cytoplasm</keyword>
<keyword id="KW-1185">Reference proteome</keyword>
<keyword id="KW-0694">RNA-binding</keyword>
<dbReference type="EMBL" id="AE005672">
    <property type="protein sequence ID" value="AAK75097.1"/>
    <property type="molecule type" value="Genomic_DNA"/>
</dbReference>
<dbReference type="PIR" id="H95112">
    <property type="entry name" value="H95112"/>
</dbReference>
<dbReference type="RefSeq" id="WP_001051747.1">
    <property type="nucleotide sequence ID" value="NZ_CP155539.1"/>
</dbReference>
<dbReference type="SMR" id="Q97R56"/>
<dbReference type="PaxDb" id="170187-SP_0976"/>
<dbReference type="EnsemblBacteria" id="AAK75097">
    <property type="protein sequence ID" value="AAK75097"/>
    <property type="gene ID" value="SP_0976"/>
</dbReference>
<dbReference type="KEGG" id="spn:SP_0976"/>
<dbReference type="eggNOG" id="COG0691">
    <property type="taxonomic scope" value="Bacteria"/>
</dbReference>
<dbReference type="PhylomeDB" id="Q97R56"/>
<dbReference type="BioCyc" id="SPNE170187:G1FZB-1004-MONOMER"/>
<dbReference type="Proteomes" id="UP000000585">
    <property type="component" value="Chromosome"/>
</dbReference>
<dbReference type="GO" id="GO:0005829">
    <property type="term" value="C:cytosol"/>
    <property type="evidence" value="ECO:0007669"/>
    <property type="project" value="TreeGrafter"/>
</dbReference>
<dbReference type="GO" id="GO:0003723">
    <property type="term" value="F:RNA binding"/>
    <property type="evidence" value="ECO:0007669"/>
    <property type="project" value="UniProtKB-UniRule"/>
</dbReference>
<dbReference type="GO" id="GO:0070929">
    <property type="term" value="P:trans-translation"/>
    <property type="evidence" value="ECO:0007669"/>
    <property type="project" value="UniProtKB-UniRule"/>
</dbReference>
<dbReference type="CDD" id="cd09294">
    <property type="entry name" value="SmpB"/>
    <property type="match status" value="1"/>
</dbReference>
<dbReference type="Gene3D" id="2.40.280.10">
    <property type="match status" value="1"/>
</dbReference>
<dbReference type="HAMAP" id="MF_00023">
    <property type="entry name" value="SmpB"/>
    <property type="match status" value="1"/>
</dbReference>
<dbReference type="InterPro" id="IPR023620">
    <property type="entry name" value="SmpB"/>
</dbReference>
<dbReference type="InterPro" id="IPR000037">
    <property type="entry name" value="SsrA-bd_prot"/>
</dbReference>
<dbReference type="InterPro" id="IPR020081">
    <property type="entry name" value="SsrA-bd_prot_CS"/>
</dbReference>
<dbReference type="NCBIfam" id="NF003843">
    <property type="entry name" value="PRK05422.1"/>
    <property type="match status" value="1"/>
</dbReference>
<dbReference type="NCBIfam" id="TIGR00086">
    <property type="entry name" value="smpB"/>
    <property type="match status" value="1"/>
</dbReference>
<dbReference type="PANTHER" id="PTHR30308:SF2">
    <property type="entry name" value="SSRA-BINDING PROTEIN"/>
    <property type="match status" value="1"/>
</dbReference>
<dbReference type="PANTHER" id="PTHR30308">
    <property type="entry name" value="TMRNA-BINDING COMPONENT OF TRANS-TRANSLATION TAGGING COMPLEX"/>
    <property type="match status" value="1"/>
</dbReference>
<dbReference type="Pfam" id="PF01668">
    <property type="entry name" value="SmpB"/>
    <property type="match status" value="1"/>
</dbReference>
<dbReference type="SUPFAM" id="SSF74982">
    <property type="entry name" value="Small protein B (SmpB)"/>
    <property type="match status" value="1"/>
</dbReference>
<dbReference type="PROSITE" id="PS01317">
    <property type="entry name" value="SSRP"/>
    <property type="match status" value="1"/>
</dbReference>